<keyword id="KW-0963">Cytoplasm</keyword>
<keyword id="KW-0227">DNA damage</keyword>
<keyword id="KW-0228">DNA excision</keyword>
<keyword id="KW-0234">DNA repair</keyword>
<keyword id="KW-0267">Excision nuclease</keyword>
<keyword id="KW-1185">Reference proteome</keyword>
<keyword id="KW-0742">SOS response</keyword>
<sequence length="690" mass="75948">MTTDSSDPAKPAGPGQPPGSGADTRPGGLATGQDVDPATIETDEDDEARLPDVPDEPTDAIAEGPLAVGRAAIEHAVRHAPTSPGVYRMMNAARDVLYVGKAKNVRKRLSSYARPTGQVMRIARMIAATSTIEIVSTETETEALLLEANLIKQLRPRFNVQLRDDKSFPYILITGDHWAPQILKHRGAQSRPGRYFGPFASAGAVGRTITALQRAFLVRSCTDSFFEGRTRPCLLYQIKRCAGPCTGEIDFPGYTALVREATDFLSGRSRAVKEELAREMEKASGDLAFERAALYRDRLAALSAIQSQQGINPRTVEEADVFAIHQEGGYSCVEVFFFRTGQNWGNRAYFPRAEKSFTPEEVLGAFLAQFYDDKPPPKVILLSHRIEESELLADALSIKAGHKVGVLMPQRGEKKELVAHALTNAREALGRKLADTATQSRLLQGLATVLGLPHAPRRIEVYDNSHIQGTNAVGAMIVAGPEGLLKNQYRKFNIRSENLTPGDDYAMMREVLERRFKRLLTQKAADPDKADEPEKDAVPQWPDLVIIDGGLGQLNAVRGIFDALGLSQVSLMAVAKGPDRDAGRETLFLPDRPAIKLEPRDPVLYFIQRLRDEAHRFVIGSHRKLRRKDIREAGLQEVPGIGPARKRALLHHFGTLKEIERASVADLGKVPGISAESARKIFDFFHTRPG</sequence>
<organism>
    <name type="scientific">Nitrobacter hamburgensis (strain DSM 10229 / NCIMB 13809 / X14)</name>
    <dbReference type="NCBI Taxonomy" id="323097"/>
    <lineage>
        <taxon>Bacteria</taxon>
        <taxon>Pseudomonadati</taxon>
        <taxon>Pseudomonadota</taxon>
        <taxon>Alphaproteobacteria</taxon>
        <taxon>Hyphomicrobiales</taxon>
        <taxon>Nitrobacteraceae</taxon>
        <taxon>Nitrobacter</taxon>
    </lineage>
</organism>
<evidence type="ECO:0000255" key="1">
    <source>
        <dbReference type="HAMAP-Rule" id="MF_00203"/>
    </source>
</evidence>
<evidence type="ECO:0000256" key="2">
    <source>
        <dbReference type="SAM" id="MobiDB-lite"/>
    </source>
</evidence>
<accession>Q1QIR5</accession>
<dbReference type="EMBL" id="CP000319">
    <property type="protein sequence ID" value="ABE63882.1"/>
    <property type="molecule type" value="Genomic_DNA"/>
</dbReference>
<dbReference type="RefSeq" id="WP_011511539.1">
    <property type="nucleotide sequence ID" value="NC_007964.1"/>
</dbReference>
<dbReference type="SMR" id="Q1QIR5"/>
<dbReference type="STRING" id="323097.Nham_3146"/>
<dbReference type="KEGG" id="nha:Nham_3146"/>
<dbReference type="eggNOG" id="COG0322">
    <property type="taxonomic scope" value="Bacteria"/>
</dbReference>
<dbReference type="HOGENOM" id="CLU_014841_3_0_5"/>
<dbReference type="OrthoDB" id="9804933at2"/>
<dbReference type="Proteomes" id="UP000001953">
    <property type="component" value="Chromosome"/>
</dbReference>
<dbReference type="GO" id="GO:0005737">
    <property type="term" value="C:cytoplasm"/>
    <property type="evidence" value="ECO:0007669"/>
    <property type="project" value="UniProtKB-SubCell"/>
</dbReference>
<dbReference type="GO" id="GO:0009380">
    <property type="term" value="C:excinuclease repair complex"/>
    <property type="evidence" value="ECO:0007669"/>
    <property type="project" value="InterPro"/>
</dbReference>
<dbReference type="GO" id="GO:0003677">
    <property type="term" value="F:DNA binding"/>
    <property type="evidence" value="ECO:0007669"/>
    <property type="project" value="UniProtKB-UniRule"/>
</dbReference>
<dbReference type="GO" id="GO:0009381">
    <property type="term" value="F:excinuclease ABC activity"/>
    <property type="evidence" value="ECO:0007669"/>
    <property type="project" value="UniProtKB-UniRule"/>
</dbReference>
<dbReference type="GO" id="GO:0006289">
    <property type="term" value="P:nucleotide-excision repair"/>
    <property type="evidence" value="ECO:0007669"/>
    <property type="project" value="UniProtKB-UniRule"/>
</dbReference>
<dbReference type="GO" id="GO:0009432">
    <property type="term" value="P:SOS response"/>
    <property type="evidence" value="ECO:0007669"/>
    <property type="project" value="UniProtKB-UniRule"/>
</dbReference>
<dbReference type="CDD" id="cd10434">
    <property type="entry name" value="GIY-YIG_UvrC_Cho"/>
    <property type="match status" value="1"/>
</dbReference>
<dbReference type="FunFam" id="3.30.420.340:FF:000001">
    <property type="entry name" value="UvrABC system protein C"/>
    <property type="match status" value="1"/>
</dbReference>
<dbReference type="FunFam" id="3.40.1440.10:FF:000001">
    <property type="entry name" value="UvrABC system protein C"/>
    <property type="match status" value="1"/>
</dbReference>
<dbReference type="Gene3D" id="1.10.150.20">
    <property type="entry name" value="5' to 3' exonuclease, C-terminal subdomain"/>
    <property type="match status" value="1"/>
</dbReference>
<dbReference type="Gene3D" id="3.40.1440.10">
    <property type="entry name" value="GIY-YIG endonuclease"/>
    <property type="match status" value="1"/>
</dbReference>
<dbReference type="Gene3D" id="4.10.860.10">
    <property type="entry name" value="UVR domain"/>
    <property type="match status" value="1"/>
</dbReference>
<dbReference type="Gene3D" id="3.30.420.340">
    <property type="entry name" value="UvrC, RNAse H endonuclease domain"/>
    <property type="match status" value="1"/>
</dbReference>
<dbReference type="HAMAP" id="MF_00203">
    <property type="entry name" value="UvrC"/>
    <property type="match status" value="1"/>
</dbReference>
<dbReference type="InterPro" id="IPR000305">
    <property type="entry name" value="GIY-YIG_endonuc"/>
</dbReference>
<dbReference type="InterPro" id="IPR035901">
    <property type="entry name" value="GIY-YIG_endonuc_sf"/>
</dbReference>
<dbReference type="InterPro" id="IPR047296">
    <property type="entry name" value="GIY-YIG_UvrC_Cho"/>
</dbReference>
<dbReference type="InterPro" id="IPR003583">
    <property type="entry name" value="Hlx-hairpin-Hlx_DNA-bd_motif"/>
</dbReference>
<dbReference type="InterPro" id="IPR010994">
    <property type="entry name" value="RuvA_2-like"/>
</dbReference>
<dbReference type="InterPro" id="IPR001943">
    <property type="entry name" value="UVR_dom"/>
</dbReference>
<dbReference type="InterPro" id="IPR036876">
    <property type="entry name" value="UVR_dom_sf"/>
</dbReference>
<dbReference type="InterPro" id="IPR050066">
    <property type="entry name" value="UvrABC_protein_C"/>
</dbReference>
<dbReference type="InterPro" id="IPR004791">
    <property type="entry name" value="UvrC"/>
</dbReference>
<dbReference type="InterPro" id="IPR001162">
    <property type="entry name" value="UvrC_RNase_H_dom"/>
</dbReference>
<dbReference type="InterPro" id="IPR038476">
    <property type="entry name" value="UvrC_RNase_H_dom_sf"/>
</dbReference>
<dbReference type="NCBIfam" id="NF001824">
    <property type="entry name" value="PRK00558.1-5"/>
    <property type="match status" value="1"/>
</dbReference>
<dbReference type="NCBIfam" id="TIGR00194">
    <property type="entry name" value="uvrC"/>
    <property type="match status" value="1"/>
</dbReference>
<dbReference type="PANTHER" id="PTHR30562:SF1">
    <property type="entry name" value="UVRABC SYSTEM PROTEIN C"/>
    <property type="match status" value="1"/>
</dbReference>
<dbReference type="PANTHER" id="PTHR30562">
    <property type="entry name" value="UVRC/OXIDOREDUCTASE"/>
    <property type="match status" value="1"/>
</dbReference>
<dbReference type="Pfam" id="PF01541">
    <property type="entry name" value="GIY-YIG"/>
    <property type="match status" value="1"/>
</dbReference>
<dbReference type="Pfam" id="PF14520">
    <property type="entry name" value="HHH_5"/>
    <property type="match status" value="1"/>
</dbReference>
<dbReference type="Pfam" id="PF02151">
    <property type="entry name" value="UVR"/>
    <property type="match status" value="1"/>
</dbReference>
<dbReference type="Pfam" id="PF22920">
    <property type="entry name" value="UvrC_RNaseH"/>
    <property type="match status" value="1"/>
</dbReference>
<dbReference type="Pfam" id="PF08459">
    <property type="entry name" value="UvrC_RNaseH_dom"/>
    <property type="match status" value="1"/>
</dbReference>
<dbReference type="SMART" id="SM00465">
    <property type="entry name" value="GIYc"/>
    <property type="match status" value="1"/>
</dbReference>
<dbReference type="SMART" id="SM00278">
    <property type="entry name" value="HhH1"/>
    <property type="match status" value="2"/>
</dbReference>
<dbReference type="SUPFAM" id="SSF46600">
    <property type="entry name" value="C-terminal UvrC-binding domain of UvrB"/>
    <property type="match status" value="1"/>
</dbReference>
<dbReference type="SUPFAM" id="SSF82771">
    <property type="entry name" value="GIY-YIG endonuclease"/>
    <property type="match status" value="1"/>
</dbReference>
<dbReference type="SUPFAM" id="SSF47781">
    <property type="entry name" value="RuvA domain 2-like"/>
    <property type="match status" value="1"/>
</dbReference>
<dbReference type="PROSITE" id="PS50164">
    <property type="entry name" value="GIY_YIG"/>
    <property type="match status" value="1"/>
</dbReference>
<dbReference type="PROSITE" id="PS50151">
    <property type="entry name" value="UVR"/>
    <property type="match status" value="1"/>
</dbReference>
<dbReference type="PROSITE" id="PS50165">
    <property type="entry name" value="UVRC"/>
    <property type="match status" value="1"/>
</dbReference>
<feature type="chain" id="PRO_0000264917" description="UvrABC system protein C">
    <location>
        <begin position="1"/>
        <end position="690"/>
    </location>
</feature>
<feature type="domain" description="GIY-YIG" evidence="1">
    <location>
        <begin position="82"/>
        <end position="160"/>
    </location>
</feature>
<feature type="domain" description="UVR" evidence="1">
    <location>
        <begin position="270"/>
        <end position="305"/>
    </location>
</feature>
<feature type="region of interest" description="Disordered" evidence="2">
    <location>
        <begin position="1"/>
        <end position="60"/>
    </location>
</feature>
<feature type="compositionally biased region" description="Acidic residues" evidence="2">
    <location>
        <begin position="41"/>
        <end position="58"/>
    </location>
</feature>
<name>UVRC_NITHX</name>
<gene>
    <name evidence="1" type="primary">uvrC</name>
    <name type="ordered locus">Nham_3146</name>
</gene>
<reference key="1">
    <citation type="submission" date="2006-03" db="EMBL/GenBank/DDBJ databases">
        <title>Complete sequence of chromosome of Nitrobacter hamburgensis X14.</title>
        <authorList>
            <consortium name="US DOE Joint Genome Institute"/>
            <person name="Copeland A."/>
            <person name="Lucas S."/>
            <person name="Lapidus A."/>
            <person name="Barry K."/>
            <person name="Detter J.C."/>
            <person name="Glavina del Rio T."/>
            <person name="Hammon N."/>
            <person name="Israni S."/>
            <person name="Dalin E."/>
            <person name="Tice H."/>
            <person name="Pitluck S."/>
            <person name="Chain P."/>
            <person name="Malfatti S."/>
            <person name="Shin M."/>
            <person name="Vergez L."/>
            <person name="Schmutz J."/>
            <person name="Larimer F."/>
            <person name="Land M."/>
            <person name="Hauser L."/>
            <person name="Kyrpides N."/>
            <person name="Ivanova N."/>
            <person name="Ward B."/>
            <person name="Arp D."/>
            <person name="Klotz M."/>
            <person name="Stein L."/>
            <person name="O'Mullan G."/>
            <person name="Starkenburg S."/>
            <person name="Sayavedra L."/>
            <person name="Poret-Peterson A.T."/>
            <person name="Gentry M.E."/>
            <person name="Bruce D."/>
            <person name="Richardson P."/>
        </authorList>
    </citation>
    <scope>NUCLEOTIDE SEQUENCE [LARGE SCALE GENOMIC DNA]</scope>
    <source>
        <strain>DSM 10229 / NCIMB 13809 / X14</strain>
    </source>
</reference>
<protein>
    <recommendedName>
        <fullName evidence="1">UvrABC system protein C</fullName>
        <shortName evidence="1">Protein UvrC</shortName>
    </recommendedName>
    <alternativeName>
        <fullName evidence="1">Excinuclease ABC subunit C</fullName>
    </alternativeName>
</protein>
<comment type="function">
    <text evidence="1">The UvrABC repair system catalyzes the recognition and processing of DNA lesions. UvrC both incises the 5' and 3' sides of the lesion. The N-terminal half is responsible for the 3' incision and the C-terminal half is responsible for the 5' incision.</text>
</comment>
<comment type="subunit">
    <text evidence="1">Interacts with UvrB in an incision complex.</text>
</comment>
<comment type="subcellular location">
    <subcellularLocation>
        <location evidence="1">Cytoplasm</location>
    </subcellularLocation>
</comment>
<comment type="similarity">
    <text evidence="1">Belongs to the UvrC family.</text>
</comment>
<proteinExistence type="inferred from homology"/>